<accession>Q8BMI4</accession>
<accession>B2RR04</accession>
<accession>Q3TYY2</accession>
<accession>Q5CZW6</accession>
<accession>Q8C0J0</accession>
<reference key="1">
    <citation type="journal article" date="2005" name="Science">
        <title>The transcriptional landscape of the mammalian genome.</title>
        <authorList>
            <person name="Carninci P."/>
            <person name="Kasukawa T."/>
            <person name="Katayama S."/>
            <person name="Gough J."/>
            <person name="Frith M.C."/>
            <person name="Maeda N."/>
            <person name="Oyama R."/>
            <person name="Ravasi T."/>
            <person name="Lenhard B."/>
            <person name="Wells C."/>
            <person name="Kodzius R."/>
            <person name="Shimokawa K."/>
            <person name="Bajic V.B."/>
            <person name="Brenner S.E."/>
            <person name="Batalov S."/>
            <person name="Forrest A.R."/>
            <person name="Zavolan M."/>
            <person name="Davis M.J."/>
            <person name="Wilming L.G."/>
            <person name="Aidinis V."/>
            <person name="Allen J.E."/>
            <person name="Ambesi-Impiombato A."/>
            <person name="Apweiler R."/>
            <person name="Aturaliya R.N."/>
            <person name="Bailey T.L."/>
            <person name="Bansal M."/>
            <person name="Baxter L."/>
            <person name="Beisel K.W."/>
            <person name="Bersano T."/>
            <person name="Bono H."/>
            <person name="Chalk A.M."/>
            <person name="Chiu K.P."/>
            <person name="Choudhary V."/>
            <person name="Christoffels A."/>
            <person name="Clutterbuck D.R."/>
            <person name="Crowe M.L."/>
            <person name="Dalla E."/>
            <person name="Dalrymple B.P."/>
            <person name="de Bono B."/>
            <person name="Della Gatta G."/>
            <person name="di Bernardo D."/>
            <person name="Down T."/>
            <person name="Engstrom P."/>
            <person name="Fagiolini M."/>
            <person name="Faulkner G."/>
            <person name="Fletcher C.F."/>
            <person name="Fukushima T."/>
            <person name="Furuno M."/>
            <person name="Futaki S."/>
            <person name="Gariboldi M."/>
            <person name="Georgii-Hemming P."/>
            <person name="Gingeras T.R."/>
            <person name="Gojobori T."/>
            <person name="Green R.E."/>
            <person name="Gustincich S."/>
            <person name="Harbers M."/>
            <person name="Hayashi Y."/>
            <person name="Hensch T.K."/>
            <person name="Hirokawa N."/>
            <person name="Hill D."/>
            <person name="Huminiecki L."/>
            <person name="Iacono M."/>
            <person name="Ikeo K."/>
            <person name="Iwama A."/>
            <person name="Ishikawa T."/>
            <person name="Jakt M."/>
            <person name="Kanapin A."/>
            <person name="Katoh M."/>
            <person name="Kawasawa Y."/>
            <person name="Kelso J."/>
            <person name="Kitamura H."/>
            <person name="Kitano H."/>
            <person name="Kollias G."/>
            <person name="Krishnan S.P."/>
            <person name="Kruger A."/>
            <person name="Kummerfeld S.K."/>
            <person name="Kurochkin I.V."/>
            <person name="Lareau L.F."/>
            <person name="Lazarevic D."/>
            <person name="Lipovich L."/>
            <person name="Liu J."/>
            <person name="Liuni S."/>
            <person name="McWilliam S."/>
            <person name="Madan Babu M."/>
            <person name="Madera M."/>
            <person name="Marchionni L."/>
            <person name="Matsuda H."/>
            <person name="Matsuzawa S."/>
            <person name="Miki H."/>
            <person name="Mignone F."/>
            <person name="Miyake S."/>
            <person name="Morris K."/>
            <person name="Mottagui-Tabar S."/>
            <person name="Mulder N."/>
            <person name="Nakano N."/>
            <person name="Nakauchi H."/>
            <person name="Ng P."/>
            <person name="Nilsson R."/>
            <person name="Nishiguchi S."/>
            <person name="Nishikawa S."/>
            <person name="Nori F."/>
            <person name="Ohara O."/>
            <person name="Okazaki Y."/>
            <person name="Orlando V."/>
            <person name="Pang K.C."/>
            <person name="Pavan W.J."/>
            <person name="Pavesi G."/>
            <person name="Pesole G."/>
            <person name="Petrovsky N."/>
            <person name="Piazza S."/>
            <person name="Reed J."/>
            <person name="Reid J.F."/>
            <person name="Ring B.Z."/>
            <person name="Ringwald M."/>
            <person name="Rost B."/>
            <person name="Ruan Y."/>
            <person name="Salzberg S.L."/>
            <person name="Sandelin A."/>
            <person name="Schneider C."/>
            <person name="Schoenbach C."/>
            <person name="Sekiguchi K."/>
            <person name="Semple C.A."/>
            <person name="Seno S."/>
            <person name="Sessa L."/>
            <person name="Sheng Y."/>
            <person name="Shibata Y."/>
            <person name="Shimada H."/>
            <person name="Shimada K."/>
            <person name="Silva D."/>
            <person name="Sinclair B."/>
            <person name="Sperling S."/>
            <person name="Stupka E."/>
            <person name="Sugiura K."/>
            <person name="Sultana R."/>
            <person name="Takenaka Y."/>
            <person name="Taki K."/>
            <person name="Tammoja K."/>
            <person name="Tan S.L."/>
            <person name="Tang S."/>
            <person name="Taylor M.S."/>
            <person name="Tegner J."/>
            <person name="Teichmann S.A."/>
            <person name="Ueda H.R."/>
            <person name="van Nimwegen E."/>
            <person name="Verardo R."/>
            <person name="Wei C.L."/>
            <person name="Yagi K."/>
            <person name="Yamanishi H."/>
            <person name="Zabarovsky E."/>
            <person name="Zhu S."/>
            <person name="Zimmer A."/>
            <person name="Hide W."/>
            <person name="Bult C."/>
            <person name="Grimmond S.M."/>
            <person name="Teasdale R.D."/>
            <person name="Liu E.T."/>
            <person name="Brusic V."/>
            <person name="Quackenbush J."/>
            <person name="Wahlestedt C."/>
            <person name="Mattick J.S."/>
            <person name="Hume D.A."/>
            <person name="Kai C."/>
            <person name="Sasaki D."/>
            <person name="Tomaru Y."/>
            <person name="Fukuda S."/>
            <person name="Kanamori-Katayama M."/>
            <person name="Suzuki M."/>
            <person name="Aoki J."/>
            <person name="Arakawa T."/>
            <person name="Iida J."/>
            <person name="Imamura K."/>
            <person name="Itoh M."/>
            <person name="Kato T."/>
            <person name="Kawaji H."/>
            <person name="Kawagashira N."/>
            <person name="Kawashima T."/>
            <person name="Kojima M."/>
            <person name="Kondo S."/>
            <person name="Konno H."/>
            <person name="Nakano K."/>
            <person name="Ninomiya N."/>
            <person name="Nishio T."/>
            <person name="Okada M."/>
            <person name="Plessy C."/>
            <person name="Shibata K."/>
            <person name="Shiraki T."/>
            <person name="Suzuki S."/>
            <person name="Tagami M."/>
            <person name="Waki K."/>
            <person name="Watahiki A."/>
            <person name="Okamura-Oho Y."/>
            <person name="Suzuki H."/>
            <person name="Kawai J."/>
            <person name="Hayashizaki Y."/>
        </authorList>
    </citation>
    <scope>NUCLEOTIDE SEQUENCE [LARGE SCALE MRNA] (ISOFORM 1)</scope>
    <scope>NUCLEOTIDE SEQUENCE [LARGE SCALE MRNA] OF 1-804 (ISOFORM 2)</scope>
    <source>
        <strain>C57BL/6J</strain>
        <tissue>Forelimb</tissue>
        <tissue>Inner ear</tissue>
        <tissue>Thymus</tissue>
    </source>
</reference>
<reference key="2">
    <citation type="journal article" date="2004" name="Genome Res.">
        <title>The status, quality, and expansion of the NIH full-length cDNA project: the Mammalian Gene Collection (MGC).</title>
        <authorList>
            <consortium name="The MGC Project Team"/>
        </authorList>
    </citation>
    <scope>NUCLEOTIDE SEQUENCE [LARGE SCALE MRNA] (ISOFORM 1)</scope>
    <source>
        <strain>C57BL/6J</strain>
        <tissue>Brain</tissue>
        <tissue>Head</tissue>
    </source>
</reference>
<reference key="3">
    <citation type="journal article" date="2010" name="Cell">
        <title>A tissue-specific atlas of mouse protein phosphorylation and expression.</title>
        <authorList>
            <person name="Huttlin E.L."/>
            <person name="Jedrychowski M.P."/>
            <person name="Elias J.E."/>
            <person name="Goswami T."/>
            <person name="Rad R."/>
            <person name="Beausoleil S.A."/>
            <person name="Villen J."/>
            <person name="Haas W."/>
            <person name="Sowa M.E."/>
            <person name="Gygi S.P."/>
        </authorList>
    </citation>
    <scope>PHOSPHORYLATION [LARGE SCALE ANALYSIS] AT SER-794 AND SER-795</scope>
    <scope>IDENTIFICATION BY MASS SPECTROMETRY [LARGE SCALE ANALYSIS]</scope>
    <source>
        <tissue>Spleen</tissue>
        <tissue>Testis</tissue>
    </source>
</reference>
<reference key="4">
    <citation type="journal article" date="2016" name="PLoS ONE">
        <title>The GIY-YIG type endonuclease ankyrin repeat and LEM domain-containing protein 1 (ANKLE1) is dispensable for mouse hematopoiesis.</title>
        <authorList>
            <person name="Braun J."/>
            <person name="Meixner A."/>
            <person name="Brachner A."/>
            <person name="Foisner R."/>
        </authorList>
    </citation>
    <scope>TISSUE SPECIFICITY</scope>
</reference>
<protein>
    <recommendedName>
        <fullName>Flap endonuclease GEN homolog 1</fullName>
        <ecNumber>3.1.-.-</ecNumber>
    </recommendedName>
</protein>
<comment type="function">
    <text evidence="2">Endonuclease which resolves Holliday junctions (HJs) by the introduction of symmetrically related cuts across the junction point, to produce nicked duplex products in which the nicks can be readily ligated. Four-way DNA intermediates, also known as Holliday junctions, are formed during homologous recombination and DNA repair, and their resolution is necessary for proper chromosome segregation. Cleaves HJs by a nick and counter-nick mechanism involving dual coordinated incisions that lead to the formation of ligatable nicked duplex products. Cleavage of the first strand is rate limiting, while second strand cleavage is rapid. Largely monomeric, dimerizes on the HJ and the first nick occurs upon dimerization at the junction. Efficiently cleaves both single and double HJs contained within large recombination intermediates. Exhibits a weak sequence preference for incision between two G residues that reside in a T-rich region of DNA. Also has endonuclease activity on 5'-flap and replication fork (RF) DNA substrates.</text>
</comment>
<comment type="cofactor">
    <cofactor evidence="2">
        <name>Mg(2+)</name>
        <dbReference type="ChEBI" id="CHEBI:18420"/>
    </cofactor>
    <text evidence="2">Binds 2 magnesium ions per subunit. They probably participate in the reaction catalyzed by the enzyme. May bind an additional third magnesium ion after substrate binding.</text>
</comment>
<comment type="subunit">
    <text evidence="2">Largely monomeric, dimerizes on the Holliday junction and the first nick occurs upon dimerization at the junction.</text>
</comment>
<comment type="subcellular location">
    <subcellularLocation>
        <location evidence="2">Nucleus</location>
    </subcellularLocation>
</comment>
<comment type="alternative products">
    <event type="alternative splicing"/>
    <isoform>
        <id>Q8BMI4-1</id>
        <name>1</name>
        <sequence type="displayed"/>
    </isoform>
    <isoform>
        <id>Q8BMI4-2</id>
        <name>2</name>
        <sequence type="described" ref="VSP_030216"/>
    </isoform>
</comment>
<comment type="tissue specificity">
    <text evidence="4">Expressed in bone marrow and testis and to a lesser extent in thymus, spleen, brain and colon.</text>
</comment>
<comment type="domain">
    <text evidence="2">XPG-N, XPG-I,5'-3' exonuclease domains interact with DNA. Contains a chromodomain that acts as additional DNA interaction site and is required for efficient DNA recognition and cleavage.</text>
</comment>
<comment type="similarity">
    <text evidence="6">Belongs to the XPG/RAD2 endonuclease family. GEN subfamily.</text>
</comment>
<keyword id="KW-0025">Alternative splicing</keyword>
<keyword id="KW-0227">DNA damage</keyword>
<keyword id="KW-0234">DNA repair</keyword>
<keyword id="KW-0255">Endonuclease</keyword>
<keyword id="KW-0378">Hydrolase</keyword>
<keyword id="KW-0460">Magnesium</keyword>
<keyword id="KW-0479">Metal-binding</keyword>
<keyword id="KW-0540">Nuclease</keyword>
<keyword id="KW-0539">Nucleus</keyword>
<keyword id="KW-0597">Phosphoprotein</keyword>
<keyword id="KW-1185">Reference proteome</keyword>
<feature type="chain" id="PRO_0000314147" description="Flap endonuclease GEN homolog 1">
    <location>
        <begin position="1"/>
        <end position="908"/>
    </location>
</feature>
<feature type="region of interest" description="XPG-N domain" evidence="2">
    <location>
        <begin position="2"/>
        <end position="96"/>
    </location>
</feature>
<feature type="region of interest" description="XPG-I domain" evidence="2">
    <location>
        <begin position="122"/>
        <end position="208"/>
    </location>
</feature>
<feature type="region of interest" description="5'-3' exonuclease domain" evidence="2">
    <location>
        <begin position="208"/>
        <end position="383"/>
    </location>
</feature>
<feature type="region of interest" description="Chromodomain" evidence="2">
    <location>
        <begin position="389"/>
        <end position="463"/>
    </location>
</feature>
<feature type="region of interest" description="Disordered" evidence="3">
    <location>
        <begin position="460"/>
        <end position="482"/>
    </location>
</feature>
<feature type="region of interest" description="Disordered" evidence="3">
    <location>
        <begin position="629"/>
        <end position="650"/>
    </location>
</feature>
<feature type="region of interest" description="Disordered" evidence="3">
    <location>
        <begin position="792"/>
        <end position="834"/>
    </location>
</feature>
<feature type="region of interest" description="Disordered" evidence="3">
    <location>
        <begin position="853"/>
        <end position="886"/>
    </location>
</feature>
<feature type="compositionally biased region" description="Basic residues" evidence="3">
    <location>
        <begin position="465"/>
        <end position="476"/>
    </location>
</feature>
<feature type="compositionally biased region" description="Basic and acidic residues" evidence="3">
    <location>
        <begin position="824"/>
        <end position="834"/>
    </location>
</feature>
<feature type="binding site" evidence="1">
    <location>
        <position position="30"/>
    </location>
    <ligand>
        <name>Mg(2+)</name>
        <dbReference type="ChEBI" id="CHEBI:18420"/>
        <label>1</label>
    </ligand>
</feature>
<feature type="binding site" evidence="2">
    <location>
        <position position="75"/>
    </location>
    <ligand>
        <name>Mg(2+)</name>
        <dbReference type="ChEBI" id="CHEBI:18420"/>
        <label>1</label>
    </ligand>
</feature>
<feature type="binding site" evidence="2">
    <location>
        <position position="134"/>
    </location>
    <ligand>
        <name>Mg(2+)</name>
        <dbReference type="ChEBI" id="CHEBI:18420"/>
        <label>1</label>
    </ligand>
</feature>
<feature type="binding site" evidence="1">
    <location>
        <position position="136"/>
    </location>
    <ligand>
        <name>Mg(2+)</name>
        <dbReference type="ChEBI" id="CHEBI:18420"/>
        <label>1</label>
    </ligand>
</feature>
<feature type="binding site" evidence="1">
    <location>
        <position position="155"/>
    </location>
    <ligand>
        <name>Mg(2+)</name>
        <dbReference type="ChEBI" id="CHEBI:18420"/>
        <label>2</label>
    </ligand>
</feature>
<feature type="binding site" evidence="1">
    <location>
        <position position="157"/>
    </location>
    <ligand>
        <name>Mg(2+)</name>
        <dbReference type="ChEBI" id="CHEBI:18420"/>
        <label>2</label>
    </ligand>
</feature>
<feature type="binding site" evidence="1">
    <location>
        <position position="208"/>
    </location>
    <ligand>
        <name>Mg(2+)</name>
        <dbReference type="ChEBI" id="CHEBI:18420"/>
        <label>2</label>
    </ligand>
</feature>
<feature type="modified residue" description="Phosphoserine" evidence="7">
    <location>
        <position position="794"/>
    </location>
</feature>
<feature type="modified residue" description="Phosphoserine" evidence="7">
    <location>
        <position position="795"/>
    </location>
</feature>
<feature type="splice variant" id="VSP_030216" description="In isoform 2." evidence="5">
    <location>
        <begin position="1"/>
        <end position="65"/>
    </location>
</feature>
<feature type="sequence conflict" description="In Ref. 1; BAC27242." evidence="6" ref="1">
    <original>V</original>
    <variation>I</variation>
    <location>
        <position position="48"/>
    </location>
</feature>
<feature type="sequence conflict" description="In Ref. 1; BAC27207." evidence="6" ref="1">
    <original>L</original>
    <variation>H</variation>
    <location>
        <position position="716"/>
    </location>
</feature>
<organism>
    <name type="scientific">Mus musculus</name>
    <name type="common">Mouse</name>
    <dbReference type="NCBI Taxonomy" id="10090"/>
    <lineage>
        <taxon>Eukaryota</taxon>
        <taxon>Metazoa</taxon>
        <taxon>Chordata</taxon>
        <taxon>Craniata</taxon>
        <taxon>Vertebrata</taxon>
        <taxon>Euteleostomi</taxon>
        <taxon>Mammalia</taxon>
        <taxon>Eutheria</taxon>
        <taxon>Euarchontoglires</taxon>
        <taxon>Glires</taxon>
        <taxon>Rodentia</taxon>
        <taxon>Myomorpha</taxon>
        <taxon>Muroidea</taxon>
        <taxon>Muridae</taxon>
        <taxon>Murinae</taxon>
        <taxon>Mus</taxon>
        <taxon>Mus</taxon>
    </lineage>
</organism>
<proteinExistence type="evidence at protein level"/>
<gene>
    <name type="primary">Gen1</name>
</gene>
<evidence type="ECO:0000250" key="1"/>
<evidence type="ECO:0000250" key="2">
    <source>
        <dbReference type="UniProtKB" id="Q17RS7"/>
    </source>
</evidence>
<evidence type="ECO:0000256" key="3">
    <source>
        <dbReference type="SAM" id="MobiDB-lite"/>
    </source>
</evidence>
<evidence type="ECO:0000269" key="4">
    <source>
    </source>
</evidence>
<evidence type="ECO:0000303" key="5">
    <source>
    </source>
</evidence>
<evidence type="ECO:0000305" key="6"/>
<evidence type="ECO:0007744" key="7">
    <source>
    </source>
</evidence>
<dbReference type="EC" id="3.1.-.-"/>
<dbReference type="EMBL" id="AK030995">
    <property type="protein sequence ID" value="BAC27207.1"/>
    <property type="molecule type" value="mRNA"/>
</dbReference>
<dbReference type="EMBL" id="AK031077">
    <property type="protein sequence ID" value="BAC27242.1"/>
    <property type="molecule type" value="mRNA"/>
</dbReference>
<dbReference type="EMBL" id="AK158255">
    <property type="protein sequence ID" value="BAE34428.1"/>
    <property type="molecule type" value="mRNA"/>
</dbReference>
<dbReference type="EMBL" id="BC090653">
    <property type="protein sequence ID" value="AAH90653.1"/>
    <property type="molecule type" value="mRNA"/>
</dbReference>
<dbReference type="EMBL" id="BC138157">
    <property type="protein sequence ID" value="AAI38158.1"/>
    <property type="molecule type" value="mRNA"/>
</dbReference>
<dbReference type="EMBL" id="BC138158">
    <property type="protein sequence ID" value="AAI38159.1"/>
    <property type="molecule type" value="mRNA"/>
</dbReference>
<dbReference type="CCDS" id="CCDS36403.1">
    <molecule id="Q8BMI4-1"/>
</dbReference>
<dbReference type="RefSeq" id="NP_796305.3">
    <molecule id="Q8BMI4-1"/>
    <property type="nucleotide sequence ID" value="NM_177331.4"/>
</dbReference>
<dbReference type="RefSeq" id="XP_006515102.1">
    <molecule id="Q8BMI4-1"/>
    <property type="nucleotide sequence ID" value="XM_006515039.4"/>
</dbReference>
<dbReference type="RefSeq" id="XP_006515103.1">
    <molecule id="Q8BMI4-1"/>
    <property type="nucleotide sequence ID" value="XM_006515040.4"/>
</dbReference>
<dbReference type="RefSeq" id="XP_006515104.1">
    <molecule id="Q8BMI4-1"/>
    <property type="nucleotide sequence ID" value="XM_006515041.3"/>
</dbReference>
<dbReference type="RefSeq" id="XP_006515105.1">
    <molecule id="Q8BMI4-2"/>
    <property type="nucleotide sequence ID" value="XM_006515042.4"/>
</dbReference>
<dbReference type="SMR" id="Q8BMI4"/>
<dbReference type="BioGRID" id="229068">
    <property type="interactions" value="1"/>
</dbReference>
<dbReference type="FunCoup" id="Q8BMI4">
    <property type="interactions" value="422"/>
</dbReference>
<dbReference type="STRING" id="10090.ENSMUSP00000132098"/>
<dbReference type="iPTMnet" id="Q8BMI4"/>
<dbReference type="PhosphoSitePlus" id="Q8BMI4"/>
<dbReference type="PaxDb" id="10090-ENSMUSP00000132098"/>
<dbReference type="PeptideAtlas" id="Q8BMI4"/>
<dbReference type="ProteomicsDB" id="268864">
    <molecule id="Q8BMI4-1"/>
</dbReference>
<dbReference type="ProteomicsDB" id="268865">
    <molecule id="Q8BMI4-2"/>
</dbReference>
<dbReference type="Pumba" id="Q8BMI4"/>
<dbReference type="Antibodypedia" id="56005">
    <property type="antibodies" value="102 antibodies from 22 providers"/>
</dbReference>
<dbReference type="Ensembl" id="ENSMUST00000166117.4">
    <molecule id="Q8BMI4-1"/>
    <property type="protein sequence ID" value="ENSMUSP00000132098.2"/>
    <property type="gene ID" value="ENSMUSG00000051235.11"/>
</dbReference>
<dbReference type="GeneID" id="209334"/>
<dbReference type="KEGG" id="mmu:209334"/>
<dbReference type="UCSC" id="uc007nav.1">
    <molecule id="Q8BMI4-1"/>
    <property type="organism name" value="mouse"/>
</dbReference>
<dbReference type="AGR" id="MGI:2443149"/>
<dbReference type="CTD" id="348654"/>
<dbReference type="MGI" id="MGI:2443149">
    <property type="gene designation" value="Gen1"/>
</dbReference>
<dbReference type="VEuPathDB" id="HostDB:ENSMUSG00000051235"/>
<dbReference type="eggNOG" id="KOG2519">
    <property type="taxonomic scope" value="Eukaryota"/>
</dbReference>
<dbReference type="GeneTree" id="ENSGT00940000159266"/>
<dbReference type="HOGENOM" id="CLU_013777_0_0_1"/>
<dbReference type="InParanoid" id="Q8BMI4"/>
<dbReference type="OMA" id="CKSDRYC"/>
<dbReference type="OrthoDB" id="2959108at2759"/>
<dbReference type="PhylomeDB" id="Q8BMI4"/>
<dbReference type="TreeFam" id="TF323403"/>
<dbReference type="Reactome" id="R-MMU-5693568">
    <property type="pathway name" value="Resolution of D-loop Structures through Holliday Junction Intermediates"/>
</dbReference>
<dbReference type="BioGRID-ORCS" id="209334">
    <property type="hits" value="1 hit in 114 CRISPR screens"/>
</dbReference>
<dbReference type="ChiTaRS" id="Gen1">
    <property type="organism name" value="mouse"/>
</dbReference>
<dbReference type="PRO" id="PR:Q8BMI4"/>
<dbReference type="Proteomes" id="UP000000589">
    <property type="component" value="Chromosome 12"/>
</dbReference>
<dbReference type="RNAct" id="Q8BMI4">
    <property type="molecule type" value="protein"/>
</dbReference>
<dbReference type="Bgee" id="ENSMUSG00000051235">
    <property type="expression patterns" value="Expressed in embryonic post-anal tail and 130 other cell types or tissues"/>
</dbReference>
<dbReference type="ExpressionAtlas" id="Q8BMI4">
    <property type="expression patterns" value="baseline and differential"/>
</dbReference>
<dbReference type="GO" id="GO:0005813">
    <property type="term" value="C:centrosome"/>
    <property type="evidence" value="ECO:0000250"/>
    <property type="project" value="UniProtKB"/>
</dbReference>
<dbReference type="GO" id="GO:0005634">
    <property type="term" value="C:nucleus"/>
    <property type="evidence" value="ECO:0007669"/>
    <property type="project" value="UniProtKB-SubCell"/>
</dbReference>
<dbReference type="GO" id="GO:0017108">
    <property type="term" value="F:5'-flap endonuclease activity"/>
    <property type="evidence" value="ECO:0000250"/>
    <property type="project" value="UniProtKB"/>
</dbReference>
<dbReference type="GO" id="GO:0008821">
    <property type="term" value="F:crossover junction DNA endonuclease activity"/>
    <property type="evidence" value="ECO:0000250"/>
    <property type="project" value="UniProtKB"/>
</dbReference>
<dbReference type="GO" id="GO:0000400">
    <property type="term" value="F:four-way junction DNA binding"/>
    <property type="evidence" value="ECO:0000250"/>
    <property type="project" value="UniProtKB"/>
</dbReference>
<dbReference type="GO" id="GO:0000287">
    <property type="term" value="F:magnesium ion binding"/>
    <property type="evidence" value="ECO:0000250"/>
    <property type="project" value="UniProtKB"/>
</dbReference>
<dbReference type="GO" id="GO:0042803">
    <property type="term" value="F:protein homodimerization activity"/>
    <property type="evidence" value="ECO:0000250"/>
    <property type="project" value="UniProtKB"/>
</dbReference>
<dbReference type="GO" id="GO:0000724">
    <property type="term" value="P:double-strand break repair via homologous recombination"/>
    <property type="evidence" value="ECO:0000250"/>
    <property type="project" value="UniProtKB"/>
</dbReference>
<dbReference type="GO" id="GO:0090267">
    <property type="term" value="P:positive regulation of mitotic cell cycle spindle assembly checkpoint"/>
    <property type="evidence" value="ECO:0000250"/>
    <property type="project" value="UniProtKB"/>
</dbReference>
<dbReference type="GO" id="GO:0010824">
    <property type="term" value="P:regulation of centrosome duplication"/>
    <property type="evidence" value="ECO:0000250"/>
    <property type="project" value="UniProtKB"/>
</dbReference>
<dbReference type="GO" id="GO:0031297">
    <property type="term" value="P:replication fork processing"/>
    <property type="evidence" value="ECO:0000250"/>
    <property type="project" value="UniProtKB"/>
</dbReference>
<dbReference type="GO" id="GO:0071139">
    <property type="term" value="P:resolution of DNA recombination intermediates"/>
    <property type="evidence" value="ECO:0000250"/>
    <property type="project" value="UniProtKB"/>
</dbReference>
<dbReference type="GO" id="GO:0071140">
    <property type="term" value="P:resolution of mitotic recombination intermediates"/>
    <property type="evidence" value="ECO:0000250"/>
    <property type="project" value="UniProtKB"/>
</dbReference>
<dbReference type="CDD" id="cd09869">
    <property type="entry name" value="PIN_GEN1"/>
    <property type="match status" value="1"/>
</dbReference>
<dbReference type="FunFam" id="3.40.50.1010:FF:000024">
    <property type="entry name" value="flap endonuclease GEN homolog 1"/>
    <property type="match status" value="1"/>
</dbReference>
<dbReference type="FunFam" id="1.10.150.20:FF:000030">
    <property type="entry name" value="Flap endonuclease GEN-like 1"/>
    <property type="match status" value="1"/>
</dbReference>
<dbReference type="Gene3D" id="1.10.150.20">
    <property type="entry name" value="5' to 3' exonuclease, C-terminal subdomain"/>
    <property type="match status" value="1"/>
</dbReference>
<dbReference type="Gene3D" id="3.40.50.1010">
    <property type="entry name" value="5'-nuclease"/>
    <property type="match status" value="1"/>
</dbReference>
<dbReference type="InterPro" id="IPR036279">
    <property type="entry name" value="5-3_exonuclease_C_sf"/>
</dbReference>
<dbReference type="InterPro" id="IPR041012">
    <property type="entry name" value="GEN_chromo"/>
</dbReference>
<dbReference type="InterPro" id="IPR008918">
    <property type="entry name" value="HhH2"/>
</dbReference>
<dbReference type="InterPro" id="IPR029060">
    <property type="entry name" value="PIN-like_dom_sf"/>
</dbReference>
<dbReference type="InterPro" id="IPR006086">
    <property type="entry name" value="XPG-I_dom"/>
</dbReference>
<dbReference type="InterPro" id="IPR006084">
    <property type="entry name" value="XPG/Rad2"/>
</dbReference>
<dbReference type="InterPro" id="IPR006085">
    <property type="entry name" value="XPG_DNA_repair_N"/>
</dbReference>
<dbReference type="PANTHER" id="PTHR11081">
    <property type="entry name" value="FLAP ENDONUCLEASE FAMILY MEMBER"/>
    <property type="match status" value="1"/>
</dbReference>
<dbReference type="PANTHER" id="PTHR11081:SF70">
    <property type="entry name" value="FLAP ENDONUCLEASE GEN HOMOLOG 1"/>
    <property type="match status" value="1"/>
</dbReference>
<dbReference type="Pfam" id="PF18704">
    <property type="entry name" value="Chromo_2"/>
    <property type="match status" value="1"/>
</dbReference>
<dbReference type="Pfam" id="PF00867">
    <property type="entry name" value="XPG_I"/>
    <property type="match status" value="1"/>
</dbReference>
<dbReference type="Pfam" id="PF00752">
    <property type="entry name" value="XPG_N"/>
    <property type="match status" value="1"/>
</dbReference>
<dbReference type="PRINTS" id="PR00853">
    <property type="entry name" value="XPGRADSUPER"/>
</dbReference>
<dbReference type="SMART" id="SM00279">
    <property type="entry name" value="HhH2"/>
    <property type="match status" value="1"/>
</dbReference>
<dbReference type="SMART" id="SM00484">
    <property type="entry name" value="XPGI"/>
    <property type="match status" value="1"/>
</dbReference>
<dbReference type="SMART" id="SM00485">
    <property type="entry name" value="XPGN"/>
    <property type="match status" value="1"/>
</dbReference>
<dbReference type="SUPFAM" id="SSF47807">
    <property type="entry name" value="5' to 3' exonuclease, C-terminal subdomain"/>
    <property type="match status" value="1"/>
</dbReference>
<dbReference type="SUPFAM" id="SSF88723">
    <property type="entry name" value="PIN domain-like"/>
    <property type="match status" value="1"/>
</dbReference>
<name>GEN_MOUSE</name>
<sequence length="908" mass="101779">MGVNDLWQILEPVKQHIHLQDLSGKTIAVDLSLWVCEAQTVKKMIGTVKKPHLRNLFFRISYLTQMNVKLVFVMEGEPPMLKADVISKRTQTRYGPSGKSRSQKTGRSHFKSVLRECLEMLECLGMPWVQAAGEAEAMCAYLNASGHVDGCLTNDGDAFLYGAQTVYRNFTMNTKDPHVDCYTISSIKSKLGLDRDALVGLAVLLGCDYLPKGVPGVGKEQALKLLQIFKGQSLLQRFNQWIEDPCYSVPQSAPKKVVHCSVCSHPGSPKDHERNGCILCKSDKYCEPHDYDYLCPCEWHQTDHNRHLSEIENNIKKKACSCEGFPFHEVIQEFLLNKNKMLKPITYQRPDLLLFQRFTVQKMEWPSHYACEKLLVLLTRYDMIERKHGRKTSNQLQPIRIVKPRVRNGVHCLEIEWEKPEHYVVEDGDPGKLSLLTMEEASLFEAAYPDAVAVYQKQLSETKGRKQKSMKNKPKGSHLPEADDVINSQSLMTLKPTSKAFPKQNPKINLENSPDPILAQESTSPSLNSFVSPENAPCLNLQEQLVPSPRTLAIKQSKDVSHFLVSECSQPSSSSHDISVITDLQLSTIDWAGTSFSNSPAVQRNTFSQDLASESESSAILPDFEQLSYESEQGTSDSEGSGRDLQQSNPEEQLLSGISALHLHDLPLKERIRIKSSCPQYNVGADAGLESLPLKLKGSCIAYSSSDGSSNFSKDLTGVYLHKESRNSKVLDSRLQENCGANTSLPYSFSDKAVKTSSLQVGLPTAAIPHNPRVAVKTTKNLVMKNSVCLERDSSDEDNAPGSWKSKYTAPEMKHSSQKHSLVHVRDSTHNKLRNPKVESKETKLCNESFKTAEDEENGFSDLGRSPQSFRPCHDKDENSTASWENPLPLRQRLKLRFQNTQSGFYNT</sequence>